<keyword id="KW-0067">ATP-binding</keyword>
<keyword id="KW-0150">Chloroplast</keyword>
<keyword id="KW-0547">Nucleotide-binding</keyword>
<keyword id="KW-0934">Plastid</keyword>
<protein>
    <recommendedName>
        <fullName evidence="1">Protein Ycf2</fullName>
    </recommendedName>
</protein>
<geneLocation type="chloroplast"/>
<dbReference type="EMBL" id="AP002983">
    <property type="protein sequence ID" value="BAB33238.1"/>
    <property type="molecule type" value="Genomic_DNA"/>
</dbReference>
<dbReference type="EMBL" id="AP002983">
    <property type="protein sequence ID" value="BAB33256.1"/>
    <property type="molecule type" value="Genomic_DNA"/>
</dbReference>
<dbReference type="GO" id="GO:0009570">
    <property type="term" value="C:chloroplast stroma"/>
    <property type="evidence" value="ECO:0007669"/>
    <property type="project" value="UniProtKB-SubCell"/>
</dbReference>
<dbReference type="GO" id="GO:0005524">
    <property type="term" value="F:ATP binding"/>
    <property type="evidence" value="ECO:0007669"/>
    <property type="project" value="UniProtKB-KW"/>
</dbReference>
<dbReference type="GO" id="GO:0016887">
    <property type="term" value="F:ATP hydrolysis activity"/>
    <property type="evidence" value="ECO:0007669"/>
    <property type="project" value="InterPro"/>
</dbReference>
<dbReference type="CDD" id="cd19505">
    <property type="entry name" value="RecA-like_Ycf2"/>
    <property type="match status" value="1"/>
</dbReference>
<dbReference type="Gene3D" id="3.40.50.300">
    <property type="entry name" value="P-loop containing nucleotide triphosphate hydrolases"/>
    <property type="match status" value="1"/>
</dbReference>
<dbReference type="HAMAP" id="MF_01330">
    <property type="entry name" value="Ycf2"/>
    <property type="match status" value="1"/>
</dbReference>
<dbReference type="InterPro" id="IPR003593">
    <property type="entry name" value="AAA+_ATPase"/>
</dbReference>
<dbReference type="InterPro" id="IPR003959">
    <property type="entry name" value="ATPase_AAA_core"/>
</dbReference>
<dbReference type="InterPro" id="IPR027417">
    <property type="entry name" value="P-loop_NTPase"/>
</dbReference>
<dbReference type="InterPro" id="IPR008543">
    <property type="entry name" value="Uncharacterised_Ycf2"/>
</dbReference>
<dbReference type="InterPro" id="IPR056777">
    <property type="entry name" value="Ycf2_N"/>
</dbReference>
<dbReference type="PANTHER" id="PTHR33078:SF51">
    <property type="entry name" value="PROTEIN TIC 214"/>
    <property type="match status" value="1"/>
</dbReference>
<dbReference type="PANTHER" id="PTHR33078">
    <property type="entry name" value="PROTEIN YCF2-RELATED"/>
    <property type="match status" value="1"/>
</dbReference>
<dbReference type="Pfam" id="PF00004">
    <property type="entry name" value="AAA"/>
    <property type="match status" value="1"/>
</dbReference>
<dbReference type="Pfam" id="PF05695">
    <property type="entry name" value="Ycf2"/>
    <property type="match status" value="1"/>
</dbReference>
<dbReference type="SMART" id="SM00382">
    <property type="entry name" value="AAA"/>
    <property type="match status" value="1"/>
</dbReference>
<dbReference type="SUPFAM" id="SSF52540">
    <property type="entry name" value="P-loop containing nucleoside triphosphate hydrolases"/>
    <property type="match status" value="1"/>
</dbReference>
<feature type="chain" id="PRO_0000223055" description="Protein Ycf2">
    <location>
        <begin position="1"/>
        <end position="2298"/>
    </location>
</feature>
<feature type="binding site" evidence="1">
    <location>
        <begin position="1637"/>
        <end position="1644"/>
    </location>
    <ligand>
        <name>ATP</name>
        <dbReference type="ChEBI" id="CHEBI:30616"/>
    </ligand>
</feature>
<organism>
    <name type="scientific">Lotus japonicus</name>
    <name type="common">Lotus corniculatus var. japonicus</name>
    <dbReference type="NCBI Taxonomy" id="34305"/>
    <lineage>
        <taxon>Eukaryota</taxon>
        <taxon>Viridiplantae</taxon>
        <taxon>Streptophyta</taxon>
        <taxon>Embryophyta</taxon>
        <taxon>Tracheophyta</taxon>
        <taxon>Spermatophyta</taxon>
        <taxon>Magnoliopsida</taxon>
        <taxon>eudicotyledons</taxon>
        <taxon>Gunneridae</taxon>
        <taxon>Pentapetalae</taxon>
        <taxon>rosids</taxon>
        <taxon>fabids</taxon>
        <taxon>Fabales</taxon>
        <taxon>Fabaceae</taxon>
        <taxon>Papilionoideae</taxon>
        <taxon>50 kb inversion clade</taxon>
        <taxon>NPAAA clade</taxon>
        <taxon>Hologalegina</taxon>
        <taxon>robinioid clade</taxon>
        <taxon>Loteae</taxon>
        <taxon>Lotus</taxon>
    </lineage>
</organism>
<sequence>MKGHQFKSWIFELREILKEIKNSRYFLYSWTQFNSTGSFIHIFFHQESFIKLLDSRIWSILLSGNSQGSTSNRYFTIKDVVLFVVAILLYRINNRKMVERKNLYLTGLLPIPMNSIGPRNDTLEESFESSNINRLIVPLLYLPKEKKISESSFLDPKESTQVLPITKKCIMPESNWGSRWWRDWIRKKRDSSCKISNETVAGIEISFKEKDIKYLEFPFVYYMDDPIRKDHDWELFDRLSPRKRRNIINLNSGQLFEILVKDWISYLMFAFREKKPIEVEGFFKQQGAGSTIQSNDIEHVSHLFLRNKRAISLQNCAQFHMWQFRQDLFVSWGKKQPHESDFLRNISRENWIWLDNVWLVNKDRFFSKIRNVSSNIQYDSTRSSFIQVTDSSQLKGSSDQSRDHFDSIRNEDSKYDTLINQREIQQLKERSILCWDPSFLQTERTDIESERFRFPKSLSGYSSMCRLFMQREKQMNNHLLPEEIEEFLGNPTRADRFFFSDRWSELHLGSNPTERSTRDQKLLKKEQDVSFVLSKRSEKKEIVNIFKIILYLQNTVSIHPISSDPVCDMVPKDEPDSSNKMSFLNKNGLFHLFHDRNRGVYTLHHDFESEEIFQEMADLFNLSITEPDLVYHKGFAFSIDSSGLDQKQFLNEVFNSRDESKKKSLLVLPTLFYEENESFYRRIIKKWVQTSCGNDLEDPKPKIVVFTSNNIMEAVNQYRLIRNLIPIQYITYGYGYIRNVLNRFIQKNRFDRNFEYRIQRYQIENDTLNHRTRMKYTINQHFSNLKKKSQKKWFDSLILISRTERSMNRDPNAYRYKWSNGNKNFQEHLDHFISEQNSRFQVVFDRLRINQYSIDWSEVIDKKDLSKSLCFFLYKFLLFFSKFLLFLSKSLPFFFVSFGSIPIHRSEIHIYELKSPNHPLCNQLFESIGLQIVHLKKWKPFLLDDHDTSQKSRFLINGGTISPFLFNKIPKWMIDSFDTIKNRRKFFDNTDSYFSMISHDEDNWLNPVKPFHRSSLISSFYKANRLRFLNNRYHFCFYCNKRLPFYVEKACINNYDFTYGQFLNILFIRNKRFSLCGGKKKHAFLERDTISPIESRVFNILILNDFPQSGDEGYNLYKSFHFPIRSDPFVHRAIYSIADISVTPLTEGQIVNFERTYCQPLSDMNLPDSEGKNLHQYLKFNSNMGLIHIPCSEKYLPSENRKKGIPCLKKCLEKGQMYRTFQRDSVFSTLSKWNLFQTYIPWFLTSTGYKYLNFIFLDTFSDLLPILSSSQKFVSIFHDIMHRSDISWRILQKKWCLSQWNLISEISSKCFHNLLLSEEIIHRNNESPLISTHLRSLNVREFLYSILFLLLVAGYLVRTHLLFVSRVYSELQTEFEKVKSLMIPSYMIELRKLLDRYPTSEQNSFWLKNLFLVTLEQLGNSLEEIRSSASGGNMLWGGGSAYGVKSIRSKKKYLNLIDLISIIPNPINRIAFSRNMRHLSHTSKAIYSLIRKIKNVNGDWIDDKIESWVSNSDSIDDKEREFLVQFSTLTTEKRIDQILLSLTHSDHLSKNNSGYQMIEQPGTIYLRYLVDIQKKYLMNYEFNTSCLVEKRIFLAHYQTITYSQTLCGTNSFHFSSHGKPFSLRLALSPPRGLLVIGSIGTGRSYLVKYLAANSYVPFIRVFLNKFLDNKPKGFLIDDSDDIDDIDDSHDIDDIDDSNDSDDIDRDLDTELELLTMMNALTMDMMPEIDRFYITLQFELAKAMSPCIIWIPNIHDLDVNESNSLSLGLLANHLSRDCERCSTRNILVIASTHIPQKVDPALIAPNKLNTCIKIRRLLIPQQRKHFFTLSYTRRFHFEKKMFHTNGFGSITLGSNVQDLVALTNEALSISIIQKKSIIDTNLIRSALHKQTWDLRSQVRSVQDHGILFYQIGRAVSQNVLLSNCSIDPISIYMKKKSCNEGDSYLYKWYFELGTSMKNLTILLYLLSCSAGAVAQDLWSLPGPDEKNGITSYGLVENDSDLVHGLLEVEGALVGSSRTEKDCSQFDNDRVTLLLRPEPSNPLNMIQNGSCSIVDQRFLYEKYESEFEEGEGVLDLQQIEEDLFNHIVWAPRIWCPWGFLFDCIERPNELGFPYWARSFRGKRIIYDEEDELQENDSEFLQGGTMQYQTQDRSSKEQGFFRISQFIWDPTDPLFFLFKDQPFVSVFSHREFFADEEISRGLLTFQTDLPTSIYKRWFIKNTQEKHFELLIHRQRWLRTNNSLSNGFFRSNTLSESYQYLSNMFLSNGTLLDQMTKTLLRKRWLFPDEMVVAICSNNESLV</sequence>
<proteinExistence type="inferred from homology"/>
<name>YCF2_LOTJA</name>
<gene>
    <name evidence="1" type="primary">ycf2-A</name>
</gene>
<gene>
    <name evidence="1" type="primary">ycf2-B</name>
</gene>
<reference key="1">
    <citation type="journal article" date="2000" name="DNA Res.">
        <title>Complete structure of the chloroplast genome of a legume, Lotus japonicus.</title>
        <authorList>
            <person name="Kato T."/>
            <person name="Kaneko T."/>
            <person name="Sato S."/>
            <person name="Nakamura Y."/>
            <person name="Tabata S."/>
        </authorList>
    </citation>
    <scope>NUCLEOTIDE SEQUENCE [LARGE SCALE GENOMIC DNA]</scope>
    <source>
        <strain>cv. Miyakojima MG-20</strain>
    </source>
</reference>
<evidence type="ECO:0000255" key="1">
    <source>
        <dbReference type="HAMAP-Rule" id="MF_01330"/>
    </source>
</evidence>
<comment type="function">
    <text>Probable ATPase of unknown function. Its presence in a non-photosynthetic plant (Epifagus virginiana) and experiments in tobacco indicate that it has an essential function which is probably not related to photosynthesis.</text>
</comment>
<comment type="subcellular location">
    <subcellularLocation>
        <location evidence="1">Plastid</location>
        <location evidence="1">Chloroplast stroma</location>
    </subcellularLocation>
</comment>
<comment type="similarity">
    <text evidence="1">Belongs to the Ycf2 family.</text>
</comment>
<accession>Q9B1K6</accession>